<organism>
    <name type="scientific">Latilactobacillus sakei subsp. sakei (strain 23K)</name>
    <name type="common">Lactobacillus sakei subsp. sakei</name>
    <dbReference type="NCBI Taxonomy" id="314315"/>
    <lineage>
        <taxon>Bacteria</taxon>
        <taxon>Bacillati</taxon>
        <taxon>Bacillota</taxon>
        <taxon>Bacilli</taxon>
        <taxon>Lactobacillales</taxon>
        <taxon>Lactobacillaceae</taxon>
        <taxon>Latilactobacillus</taxon>
    </lineage>
</organism>
<comment type="function">
    <text evidence="1">Located on the platform of the 30S subunit, it bridges several disparate RNA helices of the 16S rRNA. Forms part of the Shine-Dalgarno cleft in the 70S ribosome.</text>
</comment>
<comment type="subunit">
    <text evidence="1">Part of the 30S ribosomal subunit. Interacts with proteins S7 and S18. Binds to IF-3.</text>
</comment>
<comment type="similarity">
    <text evidence="1">Belongs to the universal ribosomal protein uS11 family.</text>
</comment>
<proteinExistence type="inferred from homology"/>
<evidence type="ECO:0000255" key="1">
    <source>
        <dbReference type="HAMAP-Rule" id="MF_01310"/>
    </source>
</evidence>
<evidence type="ECO:0000305" key="2"/>
<sequence>MANKKNAPRKRRVKKNIEAGVAHIHSTFNNTLVMITDPNGNAVAWSSAGSLGFKGSRKSTPFAAQMAAEAAGKEAMEHGMKSIEVAVKGPGSGREAAIRSLQATGLEVTAIRDVTPVPHNGSRPPKRRRV</sequence>
<feature type="chain" id="PRO_0000230407" description="Small ribosomal subunit protein uS11">
    <location>
        <begin position="1"/>
        <end position="130"/>
    </location>
</feature>
<dbReference type="EMBL" id="CR936503">
    <property type="protein sequence ID" value="CAI56048.1"/>
    <property type="molecule type" value="Genomic_DNA"/>
</dbReference>
<dbReference type="RefSeq" id="WP_011375431.1">
    <property type="nucleotide sequence ID" value="NC_007576.1"/>
</dbReference>
<dbReference type="SMR" id="Q38UT6"/>
<dbReference type="STRING" id="314315.LCA_1740"/>
<dbReference type="GeneID" id="57132656"/>
<dbReference type="KEGG" id="lsa:LCA_1740"/>
<dbReference type="eggNOG" id="COG0100">
    <property type="taxonomic scope" value="Bacteria"/>
</dbReference>
<dbReference type="HOGENOM" id="CLU_072439_5_0_9"/>
<dbReference type="OrthoDB" id="9806415at2"/>
<dbReference type="Proteomes" id="UP000002707">
    <property type="component" value="Chromosome"/>
</dbReference>
<dbReference type="GO" id="GO:1990904">
    <property type="term" value="C:ribonucleoprotein complex"/>
    <property type="evidence" value="ECO:0007669"/>
    <property type="project" value="UniProtKB-KW"/>
</dbReference>
<dbReference type="GO" id="GO:0005840">
    <property type="term" value="C:ribosome"/>
    <property type="evidence" value="ECO:0007669"/>
    <property type="project" value="UniProtKB-KW"/>
</dbReference>
<dbReference type="GO" id="GO:0019843">
    <property type="term" value="F:rRNA binding"/>
    <property type="evidence" value="ECO:0007669"/>
    <property type="project" value="UniProtKB-UniRule"/>
</dbReference>
<dbReference type="GO" id="GO:0003735">
    <property type="term" value="F:structural constituent of ribosome"/>
    <property type="evidence" value="ECO:0007669"/>
    <property type="project" value="InterPro"/>
</dbReference>
<dbReference type="GO" id="GO:0006412">
    <property type="term" value="P:translation"/>
    <property type="evidence" value="ECO:0007669"/>
    <property type="project" value="UniProtKB-UniRule"/>
</dbReference>
<dbReference type="FunFam" id="3.30.420.80:FF:000001">
    <property type="entry name" value="30S ribosomal protein S11"/>
    <property type="match status" value="1"/>
</dbReference>
<dbReference type="Gene3D" id="3.30.420.80">
    <property type="entry name" value="Ribosomal protein S11"/>
    <property type="match status" value="1"/>
</dbReference>
<dbReference type="HAMAP" id="MF_01310">
    <property type="entry name" value="Ribosomal_uS11"/>
    <property type="match status" value="1"/>
</dbReference>
<dbReference type="InterPro" id="IPR001971">
    <property type="entry name" value="Ribosomal_uS11"/>
</dbReference>
<dbReference type="InterPro" id="IPR019981">
    <property type="entry name" value="Ribosomal_uS11_bac-type"/>
</dbReference>
<dbReference type="InterPro" id="IPR018102">
    <property type="entry name" value="Ribosomal_uS11_CS"/>
</dbReference>
<dbReference type="InterPro" id="IPR036967">
    <property type="entry name" value="Ribosomal_uS11_sf"/>
</dbReference>
<dbReference type="NCBIfam" id="NF003698">
    <property type="entry name" value="PRK05309.1"/>
    <property type="match status" value="1"/>
</dbReference>
<dbReference type="NCBIfam" id="TIGR03632">
    <property type="entry name" value="uS11_bact"/>
    <property type="match status" value="1"/>
</dbReference>
<dbReference type="PANTHER" id="PTHR11759">
    <property type="entry name" value="40S RIBOSOMAL PROTEIN S14/30S RIBOSOMAL PROTEIN S11"/>
    <property type="match status" value="1"/>
</dbReference>
<dbReference type="Pfam" id="PF00411">
    <property type="entry name" value="Ribosomal_S11"/>
    <property type="match status" value="1"/>
</dbReference>
<dbReference type="PIRSF" id="PIRSF002131">
    <property type="entry name" value="Ribosomal_S11"/>
    <property type="match status" value="1"/>
</dbReference>
<dbReference type="SUPFAM" id="SSF53137">
    <property type="entry name" value="Translational machinery components"/>
    <property type="match status" value="1"/>
</dbReference>
<dbReference type="PROSITE" id="PS00054">
    <property type="entry name" value="RIBOSOMAL_S11"/>
    <property type="match status" value="1"/>
</dbReference>
<keyword id="KW-1185">Reference proteome</keyword>
<keyword id="KW-0687">Ribonucleoprotein</keyword>
<keyword id="KW-0689">Ribosomal protein</keyword>
<keyword id="KW-0694">RNA-binding</keyword>
<keyword id="KW-0699">rRNA-binding</keyword>
<name>RS11_LATSS</name>
<reference key="1">
    <citation type="journal article" date="2005" name="Nat. Biotechnol.">
        <title>The complete genome sequence of the meat-borne lactic acid bacterium Lactobacillus sakei 23K.</title>
        <authorList>
            <person name="Chaillou S."/>
            <person name="Champomier-Verges M.-C."/>
            <person name="Cornet M."/>
            <person name="Crutz-Le Coq A.-M."/>
            <person name="Dudez A.-M."/>
            <person name="Martin V."/>
            <person name="Beaufils S."/>
            <person name="Darbon-Rongere E."/>
            <person name="Bossy R."/>
            <person name="Loux V."/>
            <person name="Zagorec M."/>
        </authorList>
    </citation>
    <scope>NUCLEOTIDE SEQUENCE [LARGE SCALE GENOMIC DNA]</scope>
    <source>
        <strain>23K</strain>
    </source>
</reference>
<protein>
    <recommendedName>
        <fullName evidence="1">Small ribosomal subunit protein uS11</fullName>
    </recommendedName>
    <alternativeName>
        <fullName evidence="2">30S ribosomal protein S11</fullName>
    </alternativeName>
</protein>
<accession>Q38UT6</accession>
<gene>
    <name evidence="1" type="primary">rpsK</name>
    <name type="ordered locus">LCA_1740</name>
</gene>